<organism>
    <name type="scientific">Saccharomyces cerevisiae (strain ATCC 204508 / S288c)</name>
    <name type="common">Baker's yeast</name>
    <dbReference type="NCBI Taxonomy" id="559292"/>
    <lineage>
        <taxon>Eukaryota</taxon>
        <taxon>Fungi</taxon>
        <taxon>Dikarya</taxon>
        <taxon>Ascomycota</taxon>
        <taxon>Saccharomycotina</taxon>
        <taxon>Saccharomycetes</taxon>
        <taxon>Saccharomycetales</taxon>
        <taxon>Saccharomycetaceae</taxon>
        <taxon>Saccharomyces</taxon>
    </lineage>
</organism>
<evidence type="ECO:0000256" key="1">
    <source>
        <dbReference type="SAM" id="MobiDB-lite"/>
    </source>
</evidence>
<evidence type="ECO:0000269" key="2">
    <source>
    </source>
</evidence>
<evidence type="ECO:0007744" key="3">
    <source>
    </source>
</evidence>
<evidence type="ECO:0007744" key="4">
    <source>
    </source>
</evidence>
<comment type="subcellular location">
    <subcellularLocation>
        <location evidence="2">Cytoplasm</location>
    </subcellularLocation>
    <subcellularLocation>
        <location evidence="2">Nucleus</location>
    </subcellularLocation>
</comment>
<protein>
    <recommendedName>
        <fullName>Uncharacterized protein YPL071C</fullName>
    </recommendedName>
</protein>
<gene>
    <name type="ordered locus">YPL071C</name>
</gene>
<reference key="1">
    <citation type="journal article" date="1997" name="Nature">
        <title>The nucleotide sequence of Saccharomyces cerevisiae chromosome XVI.</title>
        <authorList>
            <person name="Bussey H."/>
            <person name="Storms R.K."/>
            <person name="Ahmed A."/>
            <person name="Albermann K."/>
            <person name="Allen E."/>
            <person name="Ansorge W."/>
            <person name="Araujo R."/>
            <person name="Aparicio A."/>
            <person name="Barrell B.G."/>
            <person name="Badcock K."/>
            <person name="Benes V."/>
            <person name="Botstein D."/>
            <person name="Bowman S."/>
            <person name="Brueckner M."/>
            <person name="Carpenter J."/>
            <person name="Cherry J.M."/>
            <person name="Chung E."/>
            <person name="Churcher C.M."/>
            <person name="Coster F."/>
            <person name="Davis K."/>
            <person name="Davis R.W."/>
            <person name="Dietrich F.S."/>
            <person name="Delius H."/>
            <person name="DiPaolo T."/>
            <person name="Dubois E."/>
            <person name="Duesterhoeft A."/>
            <person name="Duncan M."/>
            <person name="Floeth M."/>
            <person name="Fortin N."/>
            <person name="Friesen J.D."/>
            <person name="Fritz C."/>
            <person name="Goffeau A."/>
            <person name="Hall J."/>
            <person name="Hebling U."/>
            <person name="Heumann K."/>
            <person name="Hilbert H."/>
            <person name="Hillier L.W."/>
            <person name="Hunicke-Smith S."/>
            <person name="Hyman R.W."/>
            <person name="Johnston M."/>
            <person name="Kalman S."/>
            <person name="Kleine K."/>
            <person name="Komp C."/>
            <person name="Kurdi O."/>
            <person name="Lashkari D."/>
            <person name="Lew H."/>
            <person name="Lin A."/>
            <person name="Lin D."/>
            <person name="Louis E.J."/>
            <person name="Marathe R."/>
            <person name="Messenguy F."/>
            <person name="Mewes H.-W."/>
            <person name="Mirtipati S."/>
            <person name="Moestl D."/>
            <person name="Mueller-Auer S."/>
            <person name="Namath A."/>
            <person name="Nentwich U."/>
            <person name="Oefner P."/>
            <person name="Pearson D."/>
            <person name="Petel F.X."/>
            <person name="Pohl T.M."/>
            <person name="Purnelle B."/>
            <person name="Rajandream M.A."/>
            <person name="Rechmann S."/>
            <person name="Rieger M."/>
            <person name="Riles L."/>
            <person name="Roberts D."/>
            <person name="Schaefer M."/>
            <person name="Scharfe M."/>
            <person name="Scherens B."/>
            <person name="Schramm S."/>
            <person name="Schroeder M."/>
            <person name="Sdicu A.-M."/>
            <person name="Tettelin H."/>
            <person name="Urrestarazu L.A."/>
            <person name="Ushinsky S."/>
            <person name="Vierendeels F."/>
            <person name="Vissers S."/>
            <person name="Voss H."/>
            <person name="Walsh S.V."/>
            <person name="Wambutt R."/>
            <person name="Wang Y."/>
            <person name="Wedler E."/>
            <person name="Wedler H."/>
            <person name="Winnett E."/>
            <person name="Zhong W.-W."/>
            <person name="Zollner A."/>
            <person name="Vo D.H."/>
            <person name="Hani J."/>
        </authorList>
    </citation>
    <scope>NUCLEOTIDE SEQUENCE [LARGE SCALE GENOMIC DNA]</scope>
    <source>
        <strain>ATCC 204508 / S288c</strain>
    </source>
</reference>
<reference key="2">
    <citation type="journal article" date="2014" name="G3 (Bethesda)">
        <title>The reference genome sequence of Saccharomyces cerevisiae: Then and now.</title>
        <authorList>
            <person name="Engel S.R."/>
            <person name="Dietrich F.S."/>
            <person name="Fisk D.G."/>
            <person name="Binkley G."/>
            <person name="Balakrishnan R."/>
            <person name="Costanzo M.C."/>
            <person name="Dwight S.S."/>
            <person name="Hitz B.C."/>
            <person name="Karra K."/>
            <person name="Nash R.S."/>
            <person name="Weng S."/>
            <person name="Wong E.D."/>
            <person name="Lloyd P."/>
            <person name="Skrzypek M.S."/>
            <person name="Miyasato S.R."/>
            <person name="Simison M."/>
            <person name="Cherry J.M."/>
        </authorList>
    </citation>
    <scope>GENOME REANNOTATION</scope>
    <source>
        <strain>ATCC 204508 / S288c</strain>
    </source>
</reference>
<reference key="3">
    <citation type="journal article" date="2007" name="Genome Res.">
        <title>Approaching a complete repository of sequence-verified protein-encoding clones for Saccharomyces cerevisiae.</title>
        <authorList>
            <person name="Hu Y."/>
            <person name="Rolfs A."/>
            <person name="Bhullar B."/>
            <person name="Murthy T.V.S."/>
            <person name="Zhu C."/>
            <person name="Berger M.F."/>
            <person name="Camargo A.A."/>
            <person name="Kelley F."/>
            <person name="McCarron S."/>
            <person name="Jepson D."/>
            <person name="Richardson A."/>
            <person name="Raphael J."/>
            <person name="Moreira D."/>
            <person name="Taycher E."/>
            <person name="Zuo D."/>
            <person name="Mohr S."/>
            <person name="Kane M.F."/>
            <person name="Williamson J."/>
            <person name="Simpson A.J.G."/>
            <person name="Bulyk M.L."/>
            <person name="Harlow E."/>
            <person name="Marsischky G."/>
            <person name="Kolodner R.D."/>
            <person name="LaBaer J."/>
        </authorList>
    </citation>
    <scope>NUCLEOTIDE SEQUENCE [GENOMIC DNA]</scope>
    <source>
        <strain>ATCC 204508 / S288c</strain>
    </source>
</reference>
<reference key="4">
    <citation type="journal article" date="2003" name="Nature">
        <title>Global analysis of protein localization in budding yeast.</title>
        <authorList>
            <person name="Huh W.-K."/>
            <person name="Falvo J.V."/>
            <person name="Gerke L.C."/>
            <person name="Carroll A.S."/>
            <person name="Howson R.W."/>
            <person name="Weissman J.S."/>
            <person name="O'Shea E.K."/>
        </authorList>
    </citation>
    <scope>SUBCELLULAR LOCATION [LARGE SCALE ANALYSIS]</scope>
</reference>
<reference key="5">
    <citation type="journal article" date="2007" name="Proc. Natl. Acad. Sci. U.S.A.">
        <title>Analysis of phosphorylation sites on proteins from Saccharomyces cerevisiae by electron transfer dissociation (ETD) mass spectrometry.</title>
        <authorList>
            <person name="Chi A."/>
            <person name="Huttenhower C."/>
            <person name="Geer L.Y."/>
            <person name="Coon J.J."/>
            <person name="Syka J.E.P."/>
            <person name="Bai D.L."/>
            <person name="Shabanowitz J."/>
            <person name="Burke D.J."/>
            <person name="Troyanskaya O.G."/>
            <person name="Hunt D.F."/>
        </authorList>
    </citation>
    <scope>IDENTIFICATION BY MASS SPECTROMETRY [LARGE SCALE ANALYSIS]</scope>
</reference>
<reference key="6">
    <citation type="journal article" date="2008" name="Mol. Cell. Proteomics">
        <title>A multidimensional chromatography technology for in-depth phosphoproteome analysis.</title>
        <authorList>
            <person name="Albuquerque C.P."/>
            <person name="Smolka M.B."/>
            <person name="Payne S.H."/>
            <person name="Bafna V."/>
            <person name="Eng J."/>
            <person name="Zhou H."/>
        </authorList>
    </citation>
    <scope>PHOSPHORYLATION [LARGE SCALE ANALYSIS] AT SER-21</scope>
    <scope>IDENTIFICATION BY MASS SPECTROMETRY [LARGE SCALE ANALYSIS]</scope>
</reference>
<reference key="7">
    <citation type="journal article" date="2009" name="Science">
        <title>Global analysis of Cdk1 substrate phosphorylation sites provides insights into evolution.</title>
        <authorList>
            <person name="Holt L.J."/>
            <person name="Tuch B.B."/>
            <person name="Villen J."/>
            <person name="Johnson A.D."/>
            <person name="Gygi S.P."/>
            <person name="Morgan D.O."/>
        </authorList>
    </citation>
    <scope>PHOSPHORYLATION [LARGE SCALE ANALYSIS] AT SER-21</scope>
    <scope>IDENTIFICATION BY MASS SPECTROMETRY [LARGE SCALE ANALYSIS]</scope>
</reference>
<accession>Q02864</accession>
<accession>D6W3U4</accession>
<keyword id="KW-0963">Cytoplasm</keyword>
<keyword id="KW-0539">Nucleus</keyword>
<keyword id="KW-0597">Phosphoprotein</keyword>
<keyword id="KW-1185">Reference proteome</keyword>
<dbReference type="EMBL" id="U41849">
    <property type="protein sequence ID" value="AAB68266.1"/>
    <property type="molecule type" value="Genomic_DNA"/>
</dbReference>
<dbReference type="EMBL" id="AY558333">
    <property type="protein sequence ID" value="AAS56659.1"/>
    <property type="molecule type" value="Genomic_DNA"/>
</dbReference>
<dbReference type="EMBL" id="BK006949">
    <property type="protein sequence ID" value="DAA11360.1"/>
    <property type="molecule type" value="Genomic_DNA"/>
</dbReference>
<dbReference type="PIR" id="S61115">
    <property type="entry name" value="S61115"/>
</dbReference>
<dbReference type="RefSeq" id="NP_015254.1">
    <property type="nucleotide sequence ID" value="NM_001183885.1"/>
</dbReference>
<dbReference type="BioGRID" id="36108">
    <property type="interactions" value="58"/>
</dbReference>
<dbReference type="DIP" id="DIP-5419N"/>
<dbReference type="FunCoup" id="Q02864">
    <property type="interactions" value="54"/>
</dbReference>
<dbReference type="IntAct" id="Q02864">
    <property type="interactions" value="2"/>
</dbReference>
<dbReference type="iPTMnet" id="Q02864"/>
<dbReference type="PaxDb" id="4932-YPL071C"/>
<dbReference type="PeptideAtlas" id="Q02864"/>
<dbReference type="EnsemblFungi" id="YPL071C_mRNA">
    <property type="protein sequence ID" value="YPL071C"/>
    <property type="gene ID" value="YPL071C"/>
</dbReference>
<dbReference type="GeneID" id="856034"/>
<dbReference type="KEGG" id="sce:YPL071C"/>
<dbReference type="AGR" id="SGD:S000005992"/>
<dbReference type="SGD" id="S000005992">
    <property type="gene designation" value="YPL071C"/>
</dbReference>
<dbReference type="VEuPathDB" id="FungiDB:YPL071C"/>
<dbReference type="eggNOG" id="ENOG502SEX1">
    <property type="taxonomic scope" value="Eukaryota"/>
</dbReference>
<dbReference type="HOGENOM" id="CLU_138673_0_0_1"/>
<dbReference type="InParanoid" id="Q02864"/>
<dbReference type="OMA" id="IRTRWIV"/>
<dbReference type="OrthoDB" id="4070021at2759"/>
<dbReference type="BioCyc" id="YEAST:G3O-33979-MONOMER"/>
<dbReference type="BioGRID-ORCS" id="856034">
    <property type="hits" value="0 hits in 10 CRISPR screens"/>
</dbReference>
<dbReference type="PRO" id="PR:Q02864"/>
<dbReference type="Proteomes" id="UP000002311">
    <property type="component" value="Chromosome XVI"/>
</dbReference>
<dbReference type="RNAct" id="Q02864">
    <property type="molecule type" value="protein"/>
</dbReference>
<dbReference type="GO" id="GO:0005737">
    <property type="term" value="C:cytoplasm"/>
    <property type="evidence" value="ECO:0007005"/>
    <property type="project" value="SGD"/>
</dbReference>
<dbReference type="GO" id="GO:0005634">
    <property type="term" value="C:nucleus"/>
    <property type="evidence" value="ECO:0007005"/>
    <property type="project" value="SGD"/>
</dbReference>
<proteinExistence type="evidence at protein level"/>
<feature type="chain" id="PRO_0000238643" description="Uncharacterized protein YPL071C">
    <location>
        <begin position="1"/>
        <end position="156"/>
    </location>
</feature>
<feature type="region of interest" description="Disordered" evidence="1">
    <location>
        <begin position="1"/>
        <end position="27"/>
    </location>
</feature>
<feature type="compositionally biased region" description="Polar residues" evidence="1">
    <location>
        <begin position="1"/>
        <end position="12"/>
    </location>
</feature>
<feature type="modified residue" description="Phosphoserine" evidence="3 4">
    <location>
        <position position="21"/>
    </location>
</feature>
<name>YP071_YEAST</name>
<sequence>MSSRFARSNGNPNHIRKRNHSPDPIGIDNYKRKRLIIDLENLSLNDKGPKNGHADDNNLIHNNIVFTDAIDDKVLKEIIKCSTSKRGDNDLFYDKIWERLREKRLQIIKWVDYKEIAYLSWWKWFHNQMTSKYTYDGEADTDVEMMAVDTDVDMDA</sequence>